<gene>
    <name evidence="1" type="primary">mraZ</name>
    <name type="ordered locus">BamMC406_0479</name>
</gene>
<dbReference type="EMBL" id="CP001025">
    <property type="protein sequence ID" value="ACB62976.1"/>
    <property type="molecule type" value="Genomic_DNA"/>
</dbReference>
<dbReference type="RefSeq" id="WP_006752433.1">
    <property type="nucleotide sequence ID" value="NC_010551.1"/>
</dbReference>
<dbReference type="SMR" id="B1YSR5"/>
<dbReference type="GeneID" id="93084129"/>
<dbReference type="KEGG" id="bac:BamMC406_0479"/>
<dbReference type="HOGENOM" id="CLU_107907_2_1_4"/>
<dbReference type="OrthoDB" id="9807753at2"/>
<dbReference type="Proteomes" id="UP000001680">
    <property type="component" value="Chromosome 1"/>
</dbReference>
<dbReference type="GO" id="GO:0005737">
    <property type="term" value="C:cytoplasm"/>
    <property type="evidence" value="ECO:0007669"/>
    <property type="project" value="UniProtKB-UniRule"/>
</dbReference>
<dbReference type="GO" id="GO:0009295">
    <property type="term" value="C:nucleoid"/>
    <property type="evidence" value="ECO:0007669"/>
    <property type="project" value="UniProtKB-SubCell"/>
</dbReference>
<dbReference type="GO" id="GO:0003700">
    <property type="term" value="F:DNA-binding transcription factor activity"/>
    <property type="evidence" value="ECO:0007669"/>
    <property type="project" value="UniProtKB-UniRule"/>
</dbReference>
<dbReference type="GO" id="GO:0000976">
    <property type="term" value="F:transcription cis-regulatory region binding"/>
    <property type="evidence" value="ECO:0007669"/>
    <property type="project" value="TreeGrafter"/>
</dbReference>
<dbReference type="GO" id="GO:2000143">
    <property type="term" value="P:negative regulation of DNA-templated transcription initiation"/>
    <property type="evidence" value="ECO:0007669"/>
    <property type="project" value="TreeGrafter"/>
</dbReference>
<dbReference type="CDD" id="cd16321">
    <property type="entry name" value="MraZ_C"/>
    <property type="match status" value="1"/>
</dbReference>
<dbReference type="CDD" id="cd16320">
    <property type="entry name" value="MraZ_N"/>
    <property type="match status" value="1"/>
</dbReference>
<dbReference type="Gene3D" id="3.40.1550.20">
    <property type="entry name" value="Transcriptional regulator MraZ domain"/>
    <property type="match status" value="1"/>
</dbReference>
<dbReference type="HAMAP" id="MF_01008">
    <property type="entry name" value="MraZ"/>
    <property type="match status" value="1"/>
</dbReference>
<dbReference type="InterPro" id="IPR003444">
    <property type="entry name" value="MraZ"/>
</dbReference>
<dbReference type="InterPro" id="IPR035644">
    <property type="entry name" value="MraZ_C"/>
</dbReference>
<dbReference type="InterPro" id="IPR020603">
    <property type="entry name" value="MraZ_dom"/>
</dbReference>
<dbReference type="InterPro" id="IPR035642">
    <property type="entry name" value="MraZ_N"/>
</dbReference>
<dbReference type="InterPro" id="IPR038619">
    <property type="entry name" value="MraZ_sf"/>
</dbReference>
<dbReference type="InterPro" id="IPR007159">
    <property type="entry name" value="SpoVT-AbrB_dom"/>
</dbReference>
<dbReference type="InterPro" id="IPR037914">
    <property type="entry name" value="SpoVT-AbrB_sf"/>
</dbReference>
<dbReference type="NCBIfam" id="TIGR00242">
    <property type="entry name" value="division/cell wall cluster transcriptional repressor MraZ"/>
    <property type="match status" value="1"/>
</dbReference>
<dbReference type="PANTHER" id="PTHR34701">
    <property type="entry name" value="TRANSCRIPTIONAL REGULATOR MRAZ"/>
    <property type="match status" value="1"/>
</dbReference>
<dbReference type="PANTHER" id="PTHR34701:SF1">
    <property type="entry name" value="TRANSCRIPTIONAL REGULATOR MRAZ"/>
    <property type="match status" value="1"/>
</dbReference>
<dbReference type="Pfam" id="PF02381">
    <property type="entry name" value="MraZ"/>
    <property type="match status" value="2"/>
</dbReference>
<dbReference type="SUPFAM" id="SSF89447">
    <property type="entry name" value="AbrB/MazE/MraZ-like"/>
    <property type="match status" value="1"/>
</dbReference>
<dbReference type="PROSITE" id="PS51740">
    <property type="entry name" value="SPOVT_ABRB"/>
    <property type="match status" value="2"/>
</dbReference>
<evidence type="ECO:0000255" key="1">
    <source>
        <dbReference type="HAMAP-Rule" id="MF_01008"/>
    </source>
</evidence>
<evidence type="ECO:0000255" key="2">
    <source>
        <dbReference type="PROSITE-ProRule" id="PRU01076"/>
    </source>
</evidence>
<keyword id="KW-0963">Cytoplasm</keyword>
<keyword id="KW-0238">DNA-binding</keyword>
<keyword id="KW-0677">Repeat</keyword>
<keyword id="KW-0804">Transcription</keyword>
<keyword id="KW-0805">Transcription regulation</keyword>
<accession>B1YSR5</accession>
<protein>
    <recommendedName>
        <fullName>Transcriptional regulator MraZ</fullName>
    </recommendedName>
</protein>
<proteinExistence type="inferred from homology"/>
<reference key="1">
    <citation type="submission" date="2008-04" db="EMBL/GenBank/DDBJ databases">
        <title>Complete sequence of chromosome 1 of Burkholderia ambifaria MC40-6.</title>
        <authorList>
            <person name="Copeland A."/>
            <person name="Lucas S."/>
            <person name="Lapidus A."/>
            <person name="Glavina del Rio T."/>
            <person name="Dalin E."/>
            <person name="Tice H."/>
            <person name="Pitluck S."/>
            <person name="Chain P."/>
            <person name="Malfatti S."/>
            <person name="Shin M."/>
            <person name="Vergez L."/>
            <person name="Lang D."/>
            <person name="Schmutz J."/>
            <person name="Larimer F."/>
            <person name="Land M."/>
            <person name="Hauser L."/>
            <person name="Kyrpides N."/>
            <person name="Lykidis A."/>
            <person name="Ramette A."/>
            <person name="Konstantinidis K."/>
            <person name="Tiedje J."/>
            <person name="Richardson P."/>
        </authorList>
    </citation>
    <scope>NUCLEOTIDE SEQUENCE [LARGE SCALE GENOMIC DNA]</scope>
    <source>
        <strain>MC40-6</strain>
    </source>
</reference>
<sequence length="142" mass="15884">MFQGASALTLDAKGRMSVPSRYREALQGQAEGRVTVTKHPDGCLLLFPRPEWEVFRAKIAALPMDAHWWRRIFLGNAMDVDLDSAGRILVSPELRMAAGLEKEVMLLGMGSHFELWDSQTYIAKEQAAMAQGMPDALKNFTF</sequence>
<feature type="chain" id="PRO_1000134772" description="Transcriptional regulator MraZ">
    <location>
        <begin position="1"/>
        <end position="142"/>
    </location>
</feature>
<feature type="domain" description="SpoVT-AbrB 1" evidence="2">
    <location>
        <begin position="5"/>
        <end position="51"/>
    </location>
</feature>
<feature type="domain" description="SpoVT-AbrB 2" evidence="2">
    <location>
        <begin position="77"/>
        <end position="120"/>
    </location>
</feature>
<comment type="subunit">
    <text evidence="1">Forms oligomers.</text>
</comment>
<comment type="subcellular location">
    <subcellularLocation>
        <location evidence="1">Cytoplasm</location>
        <location evidence="1">Nucleoid</location>
    </subcellularLocation>
</comment>
<comment type="similarity">
    <text evidence="1">Belongs to the MraZ family.</text>
</comment>
<name>MRAZ_BURA4</name>
<organism>
    <name type="scientific">Burkholderia ambifaria (strain MC40-6)</name>
    <dbReference type="NCBI Taxonomy" id="398577"/>
    <lineage>
        <taxon>Bacteria</taxon>
        <taxon>Pseudomonadati</taxon>
        <taxon>Pseudomonadota</taxon>
        <taxon>Betaproteobacteria</taxon>
        <taxon>Burkholderiales</taxon>
        <taxon>Burkholderiaceae</taxon>
        <taxon>Burkholderia</taxon>
        <taxon>Burkholderia cepacia complex</taxon>
    </lineage>
</organism>